<dbReference type="EC" id="6.1.1.3" evidence="1"/>
<dbReference type="EMBL" id="CP000958">
    <property type="protein sequence ID" value="ACA90627.1"/>
    <property type="molecule type" value="Genomic_DNA"/>
</dbReference>
<dbReference type="RefSeq" id="WP_012328368.1">
    <property type="nucleotide sequence ID" value="NC_010508.1"/>
</dbReference>
<dbReference type="SMR" id="B1K091"/>
<dbReference type="GeneID" id="83048248"/>
<dbReference type="KEGG" id="bcm:Bcenmc03_1452"/>
<dbReference type="HOGENOM" id="CLU_008554_0_1_4"/>
<dbReference type="Proteomes" id="UP000002169">
    <property type="component" value="Chromosome 1"/>
</dbReference>
<dbReference type="GO" id="GO:0005829">
    <property type="term" value="C:cytosol"/>
    <property type="evidence" value="ECO:0007669"/>
    <property type="project" value="TreeGrafter"/>
</dbReference>
<dbReference type="GO" id="GO:0005524">
    <property type="term" value="F:ATP binding"/>
    <property type="evidence" value="ECO:0007669"/>
    <property type="project" value="UniProtKB-UniRule"/>
</dbReference>
<dbReference type="GO" id="GO:0046872">
    <property type="term" value="F:metal ion binding"/>
    <property type="evidence" value="ECO:0007669"/>
    <property type="project" value="UniProtKB-KW"/>
</dbReference>
<dbReference type="GO" id="GO:0004829">
    <property type="term" value="F:threonine-tRNA ligase activity"/>
    <property type="evidence" value="ECO:0007669"/>
    <property type="project" value="UniProtKB-UniRule"/>
</dbReference>
<dbReference type="GO" id="GO:0000049">
    <property type="term" value="F:tRNA binding"/>
    <property type="evidence" value="ECO:0007669"/>
    <property type="project" value="UniProtKB-KW"/>
</dbReference>
<dbReference type="GO" id="GO:0006435">
    <property type="term" value="P:threonyl-tRNA aminoacylation"/>
    <property type="evidence" value="ECO:0007669"/>
    <property type="project" value="UniProtKB-UniRule"/>
</dbReference>
<dbReference type="CDD" id="cd01667">
    <property type="entry name" value="TGS_ThrRS"/>
    <property type="match status" value="1"/>
</dbReference>
<dbReference type="CDD" id="cd00860">
    <property type="entry name" value="ThrRS_anticodon"/>
    <property type="match status" value="1"/>
</dbReference>
<dbReference type="CDD" id="cd00771">
    <property type="entry name" value="ThrRS_core"/>
    <property type="match status" value="1"/>
</dbReference>
<dbReference type="FunFam" id="3.10.20.30:FF:000005">
    <property type="entry name" value="Threonine--tRNA ligase"/>
    <property type="match status" value="1"/>
</dbReference>
<dbReference type="FunFam" id="3.30.54.20:FF:000002">
    <property type="entry name" value="Threonine--tRNA ligase"/>
    <property type="match status" value="1"/>
</dbReference>
<dbReference type="FunFam" id="3.30.930.10:FF:000002">
    <property type="entry name" value="Threonine--tRNA ligase"/>
    <property type="match status" value="1"/>
</dbReference>
<dbReference type="FunFam" id="3.40.50.800:FF:000001">
    <property type="entry name" value="Threonine--tRNA ligase"/>
    <property type="match status" value="1"/>
</dbReference>
<dbReference type="FunFam" id="3.30.980.10:FF:000005">
    <property type="entry name" value="Threonyl-tRNA synthetase, mitochondrial"/>
    <property type="match status" value="1"/>
</dbReference>
<dbReference type="Gene3D" id="3.10.20.30">
    <property type="match status" value="1"/>
</dbReference>
<dbReference type="Gene3D" id="3.30.54.20">
    <property type="match status" value="1"/>
</dbReference>
<dbReference type="Gene3D" id="3.40.50.800">
    <property type="entry name" value="Anticodon-binding domain"/>
    <property type="match status" value="1"/>
</dbReference>
<dbReference type="Gene3D" id="3.30.930.10">
    <property type="entry name" value="Bira Bifunctional Protein, Domain 2"/>
    <property type="match status" value="1"/>
</dbReference>
<dbReference type="Gene3D" id="3.30.980.10">
    <property type="entry name" value="Threonyl-trna Synthetase, Chain A, domain 2"/>
    <property type="match status" value="1"/>
</dbReference>
<dbReference type="HAMAP" id="MF_00184">
    <property type="entry name" value="Thr_tRNA_synth"/>
    <property type="match status" value="1"/>
</dbReference>
<dbReference type="InterPro" id="IPR002314">
    <property type="entry name" value="aa-tRNA-synt_IIb"/>
</dbReference>
<dbReference type="InterPro" id="IPR006195">
    <property type="entry name" value="aa-tRNA-synth_II"/>
</dbReference>
<dbReference type="InterPro" id="IPR045864">
    <property type="entry name" value="aa-tRNA-synth_II/BPL/LPL"/>
</dbReference>
<dbReference type="InterPro" id="IPR004154">
    <property type="entry name" value="Anticodon-bd"/>
</dbReference>
<dbReference type="InterPro" id="IPR036621">
    <property type="entry name" value="Anticodon-bd_dom_sf"/>
</dbReference>
<dbReference type="InterPro" id="IPR012675">
    <property type="entry name" value="Beta-grasp_dom_sf"/>
</dbReference>
<dbReference type="InterPro" id="IPR004095">
    <property type="entry name" value="TGS"/>
</dbReference>
<dbReference type="InterPro" id="IPR012676">
    <property type="entry name" value="TGS-like"/>
</dbReference>
<dbReference type="InterPro" id="IPR002320">
    <property type="entry name" value="Thr-tRNA-ligase_IIa"/>
</dbReference>
<dbReference type="InterPro" id="IPR018163">
    <property type="entry name" value="Thr/Ala-tRNA-synth_IIc_edit"/>
</dbReference>
<dbReference type="InterPro" id="IPR047246">
    <property type="entry name" value="ThrRS_anticodon"/>
</dbReference>
<dbReference type="InterPro" id="IPR033728">
    <property type="entry name" value="ThrRS_core"/>
</dbReference>
<dbReference type="InterPro" id="IPR012947">
    <property type="entry name" value="tRNA_SAD"/>
</dbReference>
<dbReference type="NCBIfam" id="TIGR00418">
    <property type="entry name" value="thrS"/>
    <property type="match status" value="1"/>
</dbReference>
<dbReference type="PANTHER" id="PTHR11451:SF44">
    <property type="entry name" value="THREONINE--TRNA LIGASE, CHLOROPLASTIC_MITOCHONDRIAL 2"/>
    <property type="match status" value="1"/>
</dbReference>
<dbReference type="PANTHER" id="PTHR11451">
    <property type="entry name" value="THREONINE-TRNA LIGASE"/>
    <property type="match status" value="1"/>
</dbReference>
<dbReference type="Pfam" id="PF03129">
    <property type="entry name" value="HGTP_anticodon"/>
    <property type="match status" value="1"/>
</dbReference>
<dbReference type="Pfam" id="PF02824">
    <property type="entry name" value="TGS"/>
    <property type="match status" value="1"/>
</dbReference>
<dbReference type="Pfam" id="PF00587">
    <property type="entry name" value="tRNA-synt_2b"/>
    <property type="match status" value="1"/>
</dbReference>
<dbReference type="Pfam" id="PF07973">
    <property type="entry name" value="tRNA_SAD"/>
    <property type="match status" value="1"/>
</dbReference>
<dbReference type="PRINTS" id="PR01047">
    <property type="entry name" value="TRNASYNTHTHR"/>
</dbReference>
<dbReference type="SMART" id="SM00863">
    <property type="entry name" value="tRNA_SAD"/>
    <property type="match status" value="1"/>
</dbReference>
<dbReference type="SUPFAM" id="SSF52954">
    <property type="entry name" value="Class II aaRS ABD-related"/>
    <property type="match status" value="1"/>
</dbReference>
<dbReference type="SUPFAM" id="SSF55681">
    <property type="entry name" value="Class II aaRS and biotin synthetases"/>
    <property type="match status" value="1"/>
</dbReference>
<dbReference type="SUPFAM" id="SSF81271">
    <property type="entry name" value="TGS-like"/>
    <property type="match status" value="1"/>
</dbReference>
<dbReference type="SUPFAM" id="SSF55186">
    <property type="entry name" value="ThrRS/AlaRS common domain"/>
    <property type="match status" value="1"/>
</dbReference>
<dbReference type="PROSITE" id="PS50862">
    <property type="entry name" value="AA_TRNA_LIGASE_II"/>
    <property type="match status" value="1"/>
</dbReference>
<dbReference type="PROSITE" id="PS51880">
    <property type="entry name" value="TGS"/>
    <property type="match status" value="1"/>
</dbReference>
<reference key="1">
    <citation type="submission" date="2008-02" db="EMBL/GenBank/DDBJ databases">
        <title>Complete sequence of chromosome 1 of Burkholderia cenocepacia MC0-3.</title>
        <authorList>
            <person name="Copeland A."/>
            <person name="Lucas S."/>
            <person name="Lapidus A."/>
            <person name="Barry K."/>
            <person name="Bruce D."/>
            <person name="Goodwin L."/>
            <person name="Glavina del Rio T."/>
            <person name="Dalin E."/>
            <person name="Tice H."/>
            <person name="Pitluck S."/>
            <person name="Chain P."/>
            <person name="Malfatti S."/>
            <person name="Shin M."/>
            <person name="Vergez L."/>
            <person name="Schmutz J."/>
            <person name="Larimer F."/>
            <person name="Land M."/>
            <person name="Hauser L."/>
            <person name="Kyrpides N."/>
            <person name="Mikhailova N."/>
            <person name="Tiedje J."/>
            <person name="Richardson P."/>
        </authorList>
    </citation>
    <scope>NUCLEOTIDE SEQUENCE [LARGE SCALE GENOMIC DNA]</scope>
    <source>
        <strain>MC0-3</strain>
    </source>
</reference>
<sequence>MVSIRLPDGSVRQYEHPVTVAEVAASIGPGLAKAALGGKLDGELVDTSTVIDRDASLAIVTDKDADGLDIIRHSTAHLLAYAVKELYPDAQVTIGPVIDNGFYYDFSYNRPFTPEDLEKIEKRMQELAKKDEPVTRRVVSRDEAAGYFRSIGEKYKAEIIESIPQSDEIKLYSHGGFTDLCRGPHVPSTGKLKVFKLMKVAGAYWRGDSKNEQLQRIYGTAWTKKEDQDQYLHMLEEAEKRDHRKLGKQLDLFHMQEESPGMVFWHPKGWALWQQVEQYMRRRVNEAGYLEIKTPMIMDRSLWEASGHWQNYRENMFTTESEKRDYAIKPMNCPGHVQVFKHGLRSYRDLPLRYAEFGSCHRNEASGALHGLMRVRGFVQDDAHIFCTEDQFISESIAFNTLAMSVYKDFGFDHIDIKLSLRPDQRAGTDETWARAEQGLRDALTACGLTWEELPGEGAFYGPKIEYHIKDALGRSWQCGTLQLDMVLPERLGAEYVAEDNSRRRPVMLHRAIVGSMERFLGILIEHHAGAMPVWLAPYQAIVLNIAESQAEYAQSLTQTLQKQGVRVAADLRNEKISYKIREHTLEKVPYLLVVGDKERDAQTVAVRARGGVDLGVMPVEAFVERLQEDLRSFK</sequence>
<proteinExistence type="inferred from homology"/>
<comment type="function">
    <text evidence="1">Catalyzes the attachment of threonine to tRNA(Thr) in a two-step reaction: L-threonine is first activated by ATP to form Thr-AMP and then transferred to the acceptor end of tRNA(Thr). Also edits incorrectly charged L-seryl-tRNA(Thr).</text>
</comment>
<comment type="catalytic activity">
    <reaction evidence="1">
        <text>tRNA(Thr) + L-threonine + ATP = L-threonyl-tRNA(Thr) + AMP + diphosphate + H(+)</text>
        <dbReference type="Rhea" id="RHEA:24624"/>
        <dbReference type="Rhea" id="RHEA-COMP:9670"/>
        <dbReference type="Rhea" id="RHEA-COMP:9704"/>
        <dbReference type="ChEBI" id="CHEBI:15378"/>
        <dbReference type="ChEBI" id="CHEBI:30616"/>
        <dbReference type="ChEBI" id="CHEBI:33019"/>
        <dbReference type="ChEBI" id="CHEBI:57926"/>
        <dbReference type="ChEBI" id="CHEBI:78442"/>
        <dbReference type="ChEBI" id="CHEBI:78534"/>
        <dbReference type="ChEBI" id="CHEBI:456215"/>
        <dbReference type="EC" id="6.1.1.3"/>
    </reaction>
</comment>
<comment type="cofactor">
    <cofactor evidence="1">
        <name>Zn(2+)</name>
        <dbReference type="ChEBI" id="CHEBI:29105"/>
    </cofactor>
    <text evidence="1">Binds 1 zinc ion per subunit.</text>
</comment>
<comment type="subunit">
    <text evidence="1">Homodimer.</text>
</comment>
<comment type="subcellular location">
    <subcellularLocation>
        <location evidence="1">Cytoplasm</location>
    </subcellularLocation>
</comment>
<comment type="similarity">
    <text evidence="1">Belongs to the class-II aminoacyl-tRNA synthetase family.</text>
</comment>
<protein>
    <recommendedName>
        <fullName evidence="1">Threonine--tRNA ligase</fullName>
        <ecNumber evidence="1">6.1.1.3</ecNumber>
    </recommendedName>
    <alternativeName>
        <fullName evidence="1">Threonyl-tRNA synthetase</fullName>
        <shortName evidence="1">ThrRS</shortName>
    </alternativeName>
</protein>
<accession>B1K091</accession>
<feature type="chain" id="PRO_1000098549" description="Threonine--tRNA ligase">
    <location>
        <begin position="1"/>
        <end position="635"/>
    </location>
</feature>
<feature type="domain" description="TGS" evidence="2">
    <location>
        <begin position="1"/>
        <end position="61"/>
    </location>
</feature>
<feature type="region of interest" description="Catalytic" evidence="1">
    <location>
        <begin position="242"/>
        <end position="533"/>
    </location>
</feature>
<feature type="binding site" evidence="1">
    <location>
        <position position="333"/>
    </location>
    <ligand>
        <name>Zn(2+)</name>
        <dbReference type="ChEBI" id="CHEBI:29105"/>
    </ligand>
</feature>
<feature type="binding site" evidence="1">
    <location>
        <position position="384"/>
    </location>
    <ligand>
        <name>Zn(2+)</name>
        <dbReference type="ChEBI" id="CHEBI:29105"/>
    </ligand>
</feature>
<feature type="binding site" evidence="1">
    <location>
        <position position="510"/>
    </location>
    <ligand>
        <name>Zn(2+)</name>
        <dbReference type="ChEBI" id="CHEBI:29105"/>
    </ligand>
</feature>
<evidence type="ECO:0000255" key="1">
    <source>
        <dbReference type="HAMAP-Rule" id="MF_00184"/>
    </source>
</evidence>
<evidence type="ECO:0000255" key="2">
    <source>
        <dbReference type="PROSITE-ProRule" id="PRU01228"/>
    </source>
</evidence>
<name>SYT_BURO0</name>
<keyword id="KW-0030">Aminoacyl-tRNA synthetase</keyword>
<keyword id="KW-0067">ATP-binding</keyword>
<keyword id="KW-0963">Cytoplasm</keyword>
<keyword id="KW-0436">Ligase</keyword>
<keyword id="KW-0479">Metal-binding</keyword>
<keyword id="KW-0547">Nucleotide-binding</keyword>
<keyword id="KW-0648">Protein biosynthesis</keyword>
<keyword id="KW-0694">RNA-binding</keyword>
<keyword id="KW-0820">tRNA-binding</keyword>
<keyword id="KW-0862">Zinc</keyword>
<gene>
    <name evidence="1" type="primary">thrS</name>
    <name type="ordered locus">Bcenmc03_1452</name>
</gene>
<organism>
    <name type="scientific">Burkholderia orbicola (strain MC0-3)</name>
    <dbReference type="NCBI Taxonomy" id="406425"/>
    <lineage>
        <taxon>Bacteria</taxon>
        <taxon>Pseudomonadati</taxon>
        <taxon>Pseudomonadota</taxon>
        <taxon>Betaproteobacteria</taxon>
        <taxon>Burkholderiales</taxon>
        <taxon>Burkholderiaceae</taxon>
        <taxon>Burkholderia</taxon>
        <taxon>Burkholderia cepacia complex</taxon>
        <taxon>Burkholderia orbicola</taxon>
    </lineage>
</organism>